<accession>P71276</accession>
<organism>
    <name type="scientific">Escherichia coli</name>
    <dbReference type="NCBI Taxonomy" id="562"/>
    <lineage>
        <taxon>Bacteria</taxon>
        <taxon>Pseudomonadati</taxon>
        <taxon>Pseudomonadota</taxon>
        <taxon>Gammaproteobacteria</taxon>
        <taxon>Enterobacterales</taxon>
        <taxon>Enterobacteriaceae</taxon>
        <taxon>Escherichia</taxon>
    </lineage>
</organism>
<sequence length="408" mass="46978">MGRPYVTLNLNGMFMDKFKPYSKSNAPITTLEKLSKALSISVEELKAIAELPLDEKYTLKEIPKIDGSKRIVYSLHPKMRLLQSRINKRIFKELVVFPSFLFGSVPSKNDVLNSNVKRDYVSCAKAHCGAKTVLKVDISNFFDNIHRDLVRSVFEEILHIKDEALEYLVDICTKDDFVVQGALTSSYIATLCLFAVEGDVVRRAQRKGLVYTRLVDDITVSSKISNYDFSQMQSHIERMLSEHDLPINKRKTKIFHCSSEPIKVHGLRVDYDSPRLPSDEVKRIRASIHNLKLLAAKNNTKTSVAYRKEFNRCMGRVNKLGRVAHEKYESFKKQLQAIKPMPSKRDVAVIDAAIKSLELSYSKGNQNKHWYKRKYDLTRYKMIILTRSESFKEKLECFKSRLASLKPL</sequence>
<evidence type="ECO:0000255" key="1">
    <source>
        <dbReference type="PROSITE-ProRule" id="PRU00405"/>
    </source>
</evidence>
<evidence type="ECO:0000269" key="2">
    <source>
    </source>
</evidence>
<evidence type="ECO:0000269" key="3">
    <source>
    </source>
</evidence>
<evidence type="ECO:0000269" key="4">
    <source>
    </source>
</evidence>
<evidence type="ECO:0000303" key="5">
    <source>
    </source>
</evidence>
<evidence type="ECO:0000303" key="6">
    <source>
    </source>
</evidence>
<evidence type="ECO:0000303" key="7">
    <source ref="2"/>
</evidence>
<evidence type="ECO:0000305" key="8"/>
<evidence type="ECO:0000305" key="9">
    <source>
    </source>
</evidence>
<evidence type="ECO:0000305" key="10">
    <source>
    </source>
</evidence>
<evidence type="ECO:0000312" key="11">
    <source>
        <dbReference type="EMBL" id="AAB70880.1"/>
    </source>
</evidence>
<evidence type="ECO:0000312" key="12">
    <source>
        <dbReference type="EMBL" id="CTR27268.1"/>
    </source>
</evidence>
<gene>
    <name evidence="8" type="primary">ret</name>
    <name evidence="7" type="ORF">ERS085376_00284</name>
    <name type="ORF">Ga0119542_1001285</name>
</gene>
<reference evidence="11" key="1">
    <citation type="journal article" date="1996" name="Biochem. Biophys. Res. Commun.">
        <title>An unusual bacterial reverse transcriptase having LVDD in the YXDD box from Escherichia coli.</title>
        <authorList>
            <person name="Mao J.R."/>
            <person name="Inouye M."/>
            <person name="Inouye S."/>
        </authorList>
    </citation>
    <scope>NUCLEOTIDE SEQUENCE [GENOMIC DNA]</scope>
    <scope>FUNCTION</scope>
    <source>
        <strain>ATCC 35377 / ECOR 58</strain>
    </source>
</reference>
<reference evidence="12" key="2">
    <citation type="submission" date="2015-08" db="EMBL/GenBank/DDBJ databases">
        <authorList>
            <consortium name="Pathogen Informatics"/>
        </authorList>
    </citation>
    <scope>NUCLEOTIDE SEQUENCE [LARGE SCALE GENOMIC DNA]</scope>
    <source>
        <strain>700337</strain>
    </source>
</reference>
<reference key="3">
    <citation type="journal article" date="1997" name="J. Bacteriol.">
        <title>msDNA-Ec48, the smallest multicopy single-stranded DNA from Escherichia coli.</title>
        <authorList>
            <person name="Mao J.R."/>
            <person name="Inouye S."/>
            <person name="Inouye M."/>
        </authorList>
    </citation>
    <scope>NUCLEOTIDE SEQUENCE [GENOMIC DNA] OF 1-31</scope>
    <scope>FUNCTION</scope>
    <source>
        <strain>ATCC 35377 / ECOR 58</strain>
    </source>
</reference>
<reference key="4">
    <citation type="journal article" date="2020" name="Cell">
        <title>Bacterial Retrons Function In Anti-Phage Defense.</title>
        <authorList>
            <person name="Millman A."/>
            <person name="Bernheim A."/>
            <person name="Stokar-Avihail A."/>
            <person name="Fedorenko T."/>
            <person name="Voichek M."/>
            <person name="Leavitt A."/>
            <person name="Oppenheimer-Shaanan Y."/>
            <person name="Sorek R."/>
        </authorList>
    </citation>
    <scope>FUNCTION IN ANTIVIRAL DEFENSE</scope>
    <scope>IDENTIFICATION AS A RETRON</scope>
    <scope>MUTAGENESIS OF 216-ASP-ASP-217</scope>
    <source>
        <strain>700337</strain>
    </source>
</reference>
<feature type="chain" id="PRO_0000456017" description="Retron Ec48 reverse transcriptase">
    <location>
        <begin position="1"/>
        <end position="408"/>
    </location>
</feature>
<feature type="domain" description="Reverse transcriptase" evidence="1">
    <location>
        <begin position="43"/>
        <end position="269"/>
    </location>
</feature>
<feature type="binding site" evidence="1">
    <location>
        <position position="137"/>
    </location>
    <ligand>
        <name>Mg(2+)</name>
        <dbReference type="ChEBI" id="CHEBI:18420"/>
        <note>catalytic</note>
    </ligand>
</feature>
<feature type="binding site" evidence="1">
    <location>
        <position position="216"/>
    </location>
    <ligand>
        <name>Mg(2+)</name>
        <dbReference type="ChEBI" id="CHEBI:18420"/>
        <note>catalytic</note>
    </ligand>
</feature>
<feature type="binding site" evidence="1">
    <location>
        <position position="217"/>
    </location>
    <ligand>
        <name>Mg(2+)</name>
        <dbReference type="ChEBI" id="CHEBI:18420"/>
        <note>catalytic</note>
    </ligand>
</feature>
<feature type="mutagenesis site" description="No longer protects against infection by lambda, T2, T4, T5 or T7." evidence="2">
    <original>DD</original>
    <variation>AA</variation>
    <location>
        <begin position="216"/>
        <end position="217"/>
    </location>
</feature>
<feature type="sequence conflict" description="In Ref. 1; AAB70880." evidence="8" ref="1">
    <original>P</original>
    <variation>S</variation>
    <location>
        <position position="52"/>
    </location>
</feature>
<feature type="sequence conflict" description="In Ref. 1; AAB70880." evidence="8" ref="1">
    <original>R</original>
    <variation>H</variation>
    <location>
        <position position="250"/>
    </location>
</feature>
<feature type="sequence conflict" description="In Ref. 1; AAB70880." evidence="8" ref="1">
    <original>A</original>
    <variation>G</variation>
    <location>
        <position position="324"/>
    </location>
</feature>
<protein>
    <recommendedName>
        <fullName evidence="6">Retron Ec48 reverse transcriptase</fullName>
        <shortName evidence="6">RT-Ec48</shortName>
        <ecNumber evidence="1 10">2.7.7.49</ecNumber>
    </recommendedName>
    <alternativeName>
        <fullName evidence="5">ECOR-58 reverse transcriptase</fullName>
    </alternativeName>
</protein>
<comment type="function">
    <text evidence="2 3 4 9">Reverse transcriptase (RT) component of antiviral defense system retron Ec48, composed of a non-coding RNA (ncRNA), this reverse transcriptase (RT) and the following membrane protein. Expression of this retron confers protection against bacteriophages lambda, T2, T4, T5 and T7. At multiplicity of infection (MOI) of 0.02 cultures grow normally when infected with lambda without collapsing, at MOI 2 cultures enter growth stasis. At MOI 3 cell membranes are permeabilized within 15 minutes of infection but do not lyse, suggesting the phage are not able to finish a replication cycle. Antiviral defense is suppressed by mutations that knockout the lambda gam expression or phage T7 gp5.9 expression; both viral genes inhibit host RecBCD (PubMed:33157039). The Ec48 retron may sense the integrity of the RecBCD enzyme; when RecBCD is perturbed by viral proteins the Ec48 effector (the membrane protein) is activated, leading to abortive infection and bacterial growth arrest (Probable). Responsible for synthesis of msDNA-Ec48 (a branched molecule with RNA linked by a 2',5'-phosphodiester bond to ssDNA). The retron transcript serves as primer (from a conserved internal G residue) and template for the reaction, and codes for the RT (PubMed:8878541, PubMed:9401048).</text>
</comment>
<comment type="catalytic activity">
    <reaction evidence="1 10">
        <text>DNA(n) + a 2'-deoxyribonucleoside 5'-triphosphate = DNA(n+1) + diphosphate</text>
        <dbReference type="Rhea" id="RHEA:22508"/>
        <dbReference type="Rhea" id="RHEA-COMP:17339"/>
        <dbReference type="Rhea" id="RHEA-COMP:17340"/>
        <dbReference type="ChEBI" id="CHEBI:33019"/>
        <dbReference type="ChEBI" id="CHEBI:61560"/>
        <dbReference type="ChEBI" id="CHEBI:173112"/>
        <dbReference type="EC" id="2.7.7.49"/>
    </reaction>
</comment>
<comment type="similarity">
    <text evidence="8">Belongs to the bacterial reverse transcriptase family.</text>
</comment>
<comment type="sequence caution" evidence="8">
    <conflict type="erroneous initiation">
        <sequence resource="EMBL-CDS" id="CTR27268"/>
    </conflict>
    <text>Truncated N-terminus.</text>
</comment>
<dbReference type="EC" id="2.7.7.49" evidence="1 10"/>
<dbReference type="EMBL" id="U66703">
    <property type="protein sequence ID" value="AAB70880.1"/>
    <property type="molecule type" value="Genomic_DNA"/>
</dbReference>
<dbReference type="EMBL" id="CXZM01000001">
    <property type="protein sequence ID" value="CTR27268.1"/>
    <property type="status" value="ALT_INIT"/>
    <property type="molecule type" value="Genomic_DNA"/>
</dbReference>
<dbReference type="PIR" id="JC5244">
    <property type="entry name" value="JC5244"/>
</dbReference>
<dbReference type="SMR" id="P71276"/>
<dbReference type="GO" id="GO:0046872">
    <property type="term" value="F:metal ion binding"/>
    <property type="evidence" value="ECO:0007669"/>
    <property type="project" value="UniProtKB-KW"/>
</dbReference>
<dbReference type="GO" id="GO:0003723">
    <property type="term" value="F:RNA binding"/>
    <property type="evidence" value="ECO:0007669"/>
    <property type="project" value="UniProtKB-KW"/>
</dbReference>
<dbReference type="GO" id="GO:0003964">
    <property type="term" value="F:RNA-directed DNA polymerase activity"/>
    <property type="evidence" value="ECO:0007669"/>
    <property type="project" value="UniProtKB-KW"/>
</dbReference>
<dbReference type="GO" id="GO:0051607">
    <property type="term" value="P:defense response to virus"/>
    <property type="evidence" value="ECO:0007669"/>
    <property type="project" value="UniProtKB-KW"/>
</dbReference>
<dbReference type="CDD" id="cd03487">
    <property type="entry name" value="RT_Bac_retron_II"/>
    <property type="match status" value="1"/>
</dbReference>
<dbReference type="InterPro" id="IPR001387">
    <property type="entry name" value="Cro/C1-type_HTH"/>
</dbReference>
<dbReference type="InterPro" id="IPR043502">
    <property type="entry name" value="DNA/RNA_pol_sf"/>
</dbReference>
<dbReference type="InterPro" id="IPR051083">
    <property type="entry name" value="GrpII_Intron_Splice-Mob/Def"/>
</dbReference>
<dbReference type="InterPro" id="IPR000123">
    <property type="entry name" value="Reverse_transcriptase_msDNA"/>
</dbReference>
<dbReference type="InterPro" id="IPR000477">
    <property type="entry name" value="RT_dom"/>
</dbReference>
<dbReference type="PANTHER" id="PTHR34047">
    <property type="entry name" value="NUCLEAR INTRON MATURASE 1, MITOCHONDRIAL-RELATED"/>
    <property type="match status" value="1"/>
</dbReference>
<dbReference type="Pfam" id="PF00078">
    <property type="entry name" value="RVT_1"/>
    <property type="match status" value="1"/>
</dbReference>
<dbReference type="PRINTS" id="PR00866">
    <property type="entry name" value="RNADNAPOLMS"/>
</dbReference>
<dbReference type="SUPFAM" id="SSF56672">
    <property type="entry name" value="DNA/RNA polymerases"/>
    <property type="match status" value="1"/>
</dbReference>
<dbReference type="PROSITE" id="PS50878">
    <property type="entry name" value="RT_POL"/>
    <property type="match status" value="1"/>
</dbReference>
<proteinExistence type="evidence at protein level"/>
<keyword id="KW-0051">Antiviral defense</keyword>
<keyword id="KW-0460">Magnesium</keyword>
<keyword id="KW-0479">Metal-binding</keyword>
<keyword id="KW-0548">Nucleotidyltransferase</keyword>
<keyword id="KW-0694">RNA-binding</keyword>
<keyword id="KW-0695">RNA-directed DNA polymerase</keyword>
<keyword id="KW-0808">Transferase</keyword>
<name>RT48_ECOLX</name>